<proteinExistence type="evidence at protein level"/>
<dbReference type="EMBL" id="AK315701">
    <property type="protein sequence ID" value="BAG38063.1"/>
    <property type="molecule type" value="mRNA"/>
</dbReference>
<dbReference type="EMBL" id="AC136632">
    <property type="status" value="NOT_ANNOTATED_CDS"/>
    <property type="molecule type" value="Genomic_DNA"/>
</dbReference>
<dbReference type="EMBL" id="BC024184">
    <property type="status" value="NOT_ANNOTATED_CDS"/>
    <property type="molecule type" value="mRNA"/>
</dbReference>
<dbReference type="EMBL" id="BC024185">
    <property type="status" value="NOT_ANNOTATED_CDS"/>
    <property type="molecule type" value="mRNA"/>
</dbReference>
<dbReference type="EMBL" id="BC033886">
    <property type="status" value="NOT_ANNOTATED_CDS"/>
    <property type="molecule type" value="mRNA"/>
</dbReference>
<dbReference type="EMBL" id="DQ120624">
    <property type="protein sequence ID" value="ABB92410.1"/>
    <property type="molecule type" value="Genomic_DNA"/>
</dbReference>
<dbReference type="CCDS" id="CCDS4433.1"/>
<dbReference type="RefSeq" id="NP_001344937.1">
    <property type="nucleotide sequence ID" value="NM_001358008.2"/>
</dbReference>
<dbReference type="SMR" id="Q8NEA9"/>
<dbReference type="FunCoup" id="Q8NEA9">
    <property type="interactions" value="1197"/>
</dbReference>
<dbReference type="IntAct" id="Q8NEA9">
    <property type="interactions" value="40"/>
</dbReference>
<dbReference type="STRING" id="9606.ENSP00000497178"/>
<dbReference type="iPTMnet" id="Q8NEA9"/>
<dbReference type="PhosphoSitePlus" id="Q8NEA9"/>
<dbReference type="SwissPalm" id="Q8NEA9"/>
<dbReference type="BioMuta" id="HGNC:19717"/>
<dbReference type="DMDM" id="47605713"/>
<dbReference type="jPOST" id="Q8NEA9"/>
<dbReference type="MassIVE" id="Q8NEA9"/>
<dbReference type="PeptideAtlas" id="Q8NEA9"/>
<dbReference type="ProteomicsDB" id="73142"/>
<dbReference type="Antibodypedia" id="79002">
    <property type="antibodies" value="30 antibodies from 8 providers"/>
</dbReference>
<dbReference type="Ensembl" id="ENST00000463439.3">
    <property type="protein sequence ID" value="ENSP00000497178.1"/>
    <property type="gene ID" value="ENSG00000244234.3"/>
</dbReference>
<dbReference type="GeneID" id="64396"/>
<dbReference type="MANE-Select" id="ENST00000463439.3">
    <property type="protein sequence ID" value="ENSP00000497178.1"/>
    <property type="RefSeq nucleotide sequence ID" value="NM_001358008.2"/>
    <property type="RefSeq protein sequence ID" value="NP_001344937.1"/>
</dbReference>
<dbReference type="AGR" id="HGNC:19717"/>
<dbReference type="GeneCards" id="GMCL2"/>
<dbReference type="HGNC" id="HGNC:19717">
    <property type="gene designation" value="GMCL2"/>
</dbReference>
<dbReference type="HPA" id="ENSG00000244234">
    <property type="expression patterns" value="Tissue enriched (testis)"/>
</dbReference>
<dbReference type="MIM" id="618629">
    <property type="type" value="gene"/>
</dbReference>
<dbReference type="neXtProt" id="NX_Q8NEA9"/>
<dbReference type="VEuPathDB" id="HostDB:ENSG00000244234"/>
<dbReference type="GeneTree" id="ENSGT00940000156185"/>
<dbReference type="InParanoid" id="Q8NEA9"/>
<dbReference type="OMA" id="FPLHVIF"/>
<dbReference type="OrthoDB" id="6359943at2759"/>
<dbReference type="PAN-GO" id="Q8NEA9">
    <property type="GO annotations" value="1 GO annotation based on evolutionary models"/>
</dbReference>
<dbReference type="PhylomeDB" id="Q8NEA9"/>
<dbReference type="PathwayCommons" id="Q8NEA9"/>
<dbReference type="SignaLink" id="Q8NEA9"/>
<dbReference type="UniPathway" id="UPA00143"/>
<dbReference type="Pharos" id="Q8NEA9">
    <property type="development level" value="Tdark"/>
</dbReference>
<dbReference type="PRO" id="PR:Q8NEA9"/>
<dbReference type="Proteomes" id="UP000005640">
    <property type="component" value="Chromosome 5"/>
</dbReference>
<dbReference type="RNAct" id="Q8NEA9">
    <property type="molecule type" value="protein"/>
</dbReference>
<dbReference type="Bgee" id="ENSG00000244234">
    <property type="expression patterns" value="Expressed in male germ line stem cell (sensu Vertebrata) in testis and 8 other cell types or tissues"/>
</dbReference>
<dbReference type="GO" id="GO:0016363">
    <property type="term" value="C:nuclear matrix"/>
    <property type="evidence" value="ECO:0007669"/>
    <property type="project" value="UniProtKB-SubCell"/>
</dbReference>
<dbReference type="GO" id="GO:0005634">
    <property type="term" value="C:nucleus"/>
    <property type="evidence" value="ECO:0000318"/>
    <property type="project" value="GO_Central"/>
</dbReference>
<dbReference type="GO" id="GO:0097602">
    <property type="term" value="F:cullin family protein binding"/>
    <property type="evidence" value="ECO:0000353"/>
    <property type="project" value="UniProtKB"/>
</dbReference>
<dbReference type="GO" id="GO:0007281">
    <property type="term" value="P:germ cell development"/>
    <property type="evidence" value="ECO:0007669"/>
    <property type="project" value="InterPro"/>
</dbReference>
<dbReference type="GO" id="GO:0016567">
    <property type="term" value="P:protein ubiquitination"/>
    <property type="evidence" value="ECO:0007669"/>
    <property type="project" value="UniProtKB-UniPathway"/>
</dbReference>
<dbReference type="GO" id="GO:0007283">
    <property type="term" value="P:spermatogenesis"/>
    <property type="evidence" value="ECO:0007669"/>
    <property type="project" value="UniProtKB-KW"/>
</dbReference>
<dbReference type="CDD" id="cd18495">
    <property type="entry name" value="BACK_GCL"/>
    <property type="match status" value="1"/>
</dbReference>
<dbReference type="CDD" id="cd18305">
    <property type="entry name" value="BTB_POZ_GCL"/>
    <property type="match status" value="1"/>
</dbReference>
<dbReference type="FunFam" id="3.30.710.10:FF:000092">
    <property type="entry name" value="Germ cell-less, spermatogenesis associated 1"/>
    <property type="match status" value="1"/>
</dbReference>
<dbReference type="Gene3D" id="3.30.710.10">
    <property type="entry name" value="Potassium Channel Kv1.1, Chain A"/>
    <property type="match status" value="1"/>
</dbReference>
<dbReference type="InterPro" id="IPR000210">
    <property type="entry name" value="BTB/POZ_dom"/>
</dbReference>
<dbReference type="InterPro" id="IPR043380">
    <property type="entry name" value="Gcl-like"/>
</dbReference>
<dbReference type="InterPro" id="IPR011333">
    <property type="entry name" value="SKP1/BTB/POZ_sf"/>
</dbReference>
<dbReference type="PANTHER" id="PTHR23231">
    <property type="entry name" value="GERM CELL-LESS PROTEIN"/>
    <property type="match status" value="1"/>
</dbReference>
<dbReference type="PANTHER" id="PTHR23231:SF18">
    <property type="entry name" value="GERM CELL-LESS PROTEIN-LIKE 2"/>
    <property type="match status" value="1"/>
</dbReference>
<dbReference type="Pfam" id="PF00651">
    <property type="entry name" value="BTB"/>
    <property type="match status" value="1"/>
</dbReference>
<dbReference type="SMART" id="SM00225">
    <property type="entry name" value="BTB"/>
    <property type="match status" value="1"/>
</dbReference>
<dbReference type="SUPFAM" id="SSF54695">
    <property type="entry name" value="POZ domain"/>
    <property type="match status" value="1"/>
</dbReference>
<dbReference type="PROSITE" id="PS50097">
    <property type="entry name" value="BTB"/>
    <property type="match status" value="1"/>
</dbReference>
<reference key="1">
    <citation type="journal article" date="2004" name="Nat. Genet.">
        <title>Complete sequencing and characterization of 21,243 full-length human cDNAs.</title>
        <authorList>
            <person name="Ota T."/>
            <person name="Suzuki Y."/>
            <person name="Nishikawa T."/>
            <person name="Otsuki T."/>
            <person name="Sugiyama T."/>
            <person name="Irie R."/>
            <person name="Wakamatsu A."/>
            <person name="Hayashi K."/>
            <person name="Sato H."/>
            <person name="Nagai K."/>
            <person name="Kimura K."/>
            <person name="Makita H."/>
            <person name="Sekine M."/>
            <person name="Obayashi M."/>
            <person name="Nishi T."/>
            <person name="Shibahara T."/>
            <person name="Tanaka T."/>
            <person name="Ishii S."/>
            <person name="Yamamoto J."/>
            <person name="Saito K."/>
            <person name="Kawai Y."/>
            <person name="Isono Y."/>
            <person name="Nakamura Y."/>
            <person name="Nagahari K."/>
            <person name="Murakami K."/>
            <person name="Yasuda T."/>
            <person name="Iwayanagi T."/>
            <person name="Wagatsuma M."/>
            <person name="Shiratori A."/>
            <person name="Sudo H."/>
            <person name="Hosoiri T."/>
            <person name="Kaku Y."/>
            <person name="Kodaira H."/>
            <person name="Kondo H."/>
            <person name="Sugawara M."/>
            <person name="Takahashi M."/>
            <person name="Kanda K."/>
            <person name="Yokoi T."/>
            <person name="Furuya T."/>
            <person name="Kikkawa E."/>
            <person name="Omura Y."/>
            <person name="Abe K."/>
            <person name="Kamihara K."/>
            <person name="Katsuta N."/>
            <person name="Sato K."/>
            <person name="Tanikawa M."/>
            <person name="Yamazaki M."/>
            <person name="Ninomiya K."/>
            <person name="Ishibashi T."/>
            <person name="Yamashita H."/>
            <person name="Murakawa K."/>
            <person name="Fujimori K."/>
            <person name="Tanai H."/>
            <person name="Kimata M."/>
            <person name="Watanabe M."/>
            <person name="Hiraoka S."/>
            <person name="Chiba Y."/>
            <person name="Ishida S."/>
            <person name="Ono Y."/>
            <person name="Takiguchi S."/>
            <person name="Watanabe S."/>
            <person name="Yosida M."/>
            <person name="Hotuta T."/>
            <person name="Kusano J."/>
            <person name="Kanehori K."/>
            <person name="Takahashi-Fujii A."/>
            <person name="Hara H."/>
            <person name="Tanase T.-O."/>
            <person name="Nomura Y."/>
            <person name="Togiya S."/>
            <person name="Komai F."/>
            <person name="Hara R."/>
            <person name="Takeuchi K."/>
            <person name="Arita M."/>
            <person name="Imose N."/>
            <person name="Musashino K."/>
            <person name="Yuuki H."/>
            <person name="Oshima A."/>
            <person name="Sasaki N."/>
            <person name="Aotsuka S."/>
            <person name="Yoshikawa Y."/>
            <person name="Matsunawa H."/>
            <person name="Ichihara T."/>
            <person name="Shiohata N."/>
            <person name="Sano S."/>
            <person name="Moriya S."/>
            <person name="Momiyama H."/>
            <person name="Satoh N."/>
            <person name="Takami S."/>
            <person name="Terashima Y."/>
            <person name="Suzuki O."/>
            <person name="Nakagawa S."/>
            <person name="Senoh A."/>
            <person name="Mizoguchi H."/>
            <person name="Goto Y."/>
            <person name="Shimizu F."/>
            <person name="Wakebe H."/>
            <person name="Hishigaki H."/>
            <person name="Watanabe T."/>
            <person name="Sugiyama A."/>
            <person name="Takemoto M."/>
            <person name="Kawakami B."/>
            <person name="Yamazaki M."/>
            <person name="Watanabe K."/>
            <person name="Kumagai A."/>
            <person name="Itakura S."/>
            <person name="Fukuzumi Y."/>
            <person name="Fujimori Y."/>
            <person name="Komiyama M."/>
            <person name="Tashiro H."/>
            <person name="Tanigami A."/>
            <person name="Fujiwara T."/>
            <person name="Ono T."/>
            <person name="Yamada K."/>
            <person name="Fujii Y."/>
            <person name="Ozaki K."/>
            <person name="Hirao M."/>
            <person name="Ohmori Y."/>
            <person name="Kawabata A."/>
            <person name="Hikiji T."/>
            <person name="Kobatake N."/>
            <person name="Inagaki H."/>
            <person name="Ikema Y."/>
            <person name="Okamoto S."/>
            <person name="Okitani R."/>
            <person name="Kawakami T."/>
            <person name="Noguchi S."/>
            <person name="Itoh T."/>
            <person name="Shigeta K."/>
            <person name="Senba T."/>
            <person name="Matsumura K."/>
            <person name="Nakajima Y."/>
            <person name="Mizuno T."/>
            <person name="Morinaga M."/>
            <person name="Sasaki M."/>
            <person name="Togashi T."/>
            <person name="Oyama M."/>
            <person name="Hata H."/>
            <person name="Watanabe M."/>
            <person name="Komatsu T."/>
            <person name="Mizushima-Sugano J."/>
            <person name="Satoh T."/>
            <person name="Shirai Y."/>
            <person name="Takahashi Y."/>
            <person name="Nakagawa K."/>
            <person name="Okumura K."/>
            <person name="Nagase T."/>
            <person name="Nomura N."/>
            <person name="Kikuchi H."/>
            <person name="Masuho Y."/>
            <person name="Yamashita R."/>
            <person name="Nakai K."/>
            <person name="Yada T."/>
            <person name="Nakamura Y."/>
            <person name="Ohara O."/>
            <person name="Isogai T."/>
            <person name="Sugano S."/>
        </authorList>
    </citation>
    <scope>NUCLEOTIDE SEQUENCE [LARGE SCALE MRNA]</scope>
    <source>
        <tissue>Testis</tissue>
    </source>
</reference>
<reference key="2">
    <citation type="journal article" date="2004" name="Nature">
        <title>The DNA sequence and comparative analysis of human chromosome 5.</title>
        <authorList>
            <person name="Schmutz J."/>
            <person name="Martin J."/>
            <person name="Terry A."/>
            <person name="Couronne O."/>
            <person name="Grimwood J."/>
            <person name="Lowry S."/>
            <person name="Gordon L.A."/>
            <person name="Scott D."/>
            <person name="Xie G."/>
            <person name="Huang W."/>
            <person name="Hellsten U."/>
            <person name="Tran-Gyamfi M."/>
            <person name="She X."/>
            <person name="Prabhakar S."/>
            <person name="Aerts A."/>
            <person name="Altherr M."/>
            <person name="Bajorek E."/>
            <person name="Black S."/>
            <person name="Branscomb E."/>
            <person name="Caoile C."/>
            <person name="Challacombe J.F."/>
            <person name="Chan Y.M."/>
            <person name="Denys M."/>
            <person name="Detter J.C."/>
            <person name="Escobar J."/>
            <person name="Flowers D."/>
            <person name="Fotopulos D."/>
            <person name="Glavina T."/>
            <person name="Gomez M."/>
            <person name="Gonzales E."/>
            <person name="Goodstein D."/>
            <person name="Grigoriev I."/>
            <person name="Groza M."/>
            <person name="Hammon N."/>
            <person name="Hawkins T."/>
            <person name="Haydu L."/>
            <person name="Israni S."/>
            <person name="Jett J."/>
            <person name="Kadner K."/>
            <person name="Kimball H."/>
            <person name="Kobayashi A."/>
            <person name="Lopez F."/>
            <person name="Lou Y."/>
            <person name="Martinez D."/>
            <person name="Medina C."/>
            <person name="Morgan J."/>
            <person name="Nandkeshwar R."/>
            <person name="Noonan J.P."/>
            <person name="Pitluck S."/>
            <person name="Pollard M."/>
            <person name="Predki P."/>
            <person name="Priest J."/>
            <person name="Ramirez L."/>
            <person name="Retterer J."/>
            <person name="Rodriguez A."/>
            <person name="Rogers S."/>
            <person name="Salamov A."/>
            <person name="Salazar A."/>
            <person name="Thayer N."/>
            <person name="Tice H."/>
            <person name="Tsai M."/>
            <person name="Ustaszewska A."/>
            <person name="Vo N."/>
            <person name="Wheeler J."/>
            <person name="Wu K."/>
            <person name="Yang J."/>
            <person name="Dickson M."/>
            <person name="Cheng J.-F."/>
            <person name="Eichler E.E."/>
            <person name="Olsen A."/>
            <person name="Pennacchio L.A."/>
            <person name="Rokhsar D.S."/>
            <person name="Richardson P."/>
            <person name="Lucas S.M."/>
            <person name="Myers R.M."/>
            <person name="Rubin E.M."/>
        </authorList>
    </citation>
    <scope>NUCLEOTIDE SEQUENCE [LARGE SCALE GENOMIC DNA]</scope>
</reference>
<reference key="3">
    <citation type="journal article" date="2004" name="Genome Res.">
        <title>The status, quality, and expansion of the NIH full-length cDNA project: the Mammalian Gene Collection (MGC).</title>
        <authorList>
            <consortium name="The MGC Project Team"/>
        </authorList>
    </citation>
    <scope>NUCLEOTIDE SEQUENCE [LARGE SCALE MRNA]</scope>
    <source>
        <tissue>Testis</tissue>
    </source>
</reference>
<reference key="4">
    <citation type="journal article" date="2005" name="PLoS Biol.">
        <title>Emergence of young human genes after a burst of retroposition in primates.</title>
        <authorList>
            <person name="Marques A.C."/>
            <person name="Dupanloup I."/>
            <person name="Vinckenbosch N."/>
            <person name="Reymond A."/>
            <person name="Kaessmann H."/>
        </authorList>
    </citation>
    <scope>NUCLEOTIDE SEQUENCE [GENOMIC DNA] OF 1-513</scope>
    <scope>EVOLUTIONARY ANALYSIS</scope>
    <scope>TISSUE SPECIFICITY</scope>
</reference>
<reference key="5">
    <citation type="journal article" date="2003" name="Nat. Cell Biol.">
        <title>Targeting of protein ubiquitination by BTB-Cullin 3-Roc1 ubiquitin ligases.</title>
        <authorList>
            <person name="Furukawa M."/>
            <person name="He Y.J."/>
            <person name="Borchers C."/>
            <person name="Xiong Y."/>
        </authorList>
    </citation>
    <scope>FUNCTION AS AN E3 UBIQUITIN-PROTEIN LIGASE</scope>
    <scope>INTERACTION WITH CUL3</scope>
</reference>
<reference key="6">
    <citation type="journal article" date="2006" name="Science">
        <title>The consensus coding sequences of human breast and colorectal cancers.</title>
        <authorList>
            <person name="Sjoeblom T."/>
            <person name="Jones S."/>
            <person name="Wood L.D."/>
            <person name="Parsons D.W."/>
            <person name="Lin J."/>
            <person name="Barber T.D."/>
            <person name="Mandelker D."/>
            <person name="Leary R.J."/>
            <person name="Ptak J."/>
            <person name="Silliman N."/>
            <person name="Szabo S."/>
            <person name="Buckhaults P."/>
            <person name="Farrell C."/>
            <person name="Meeh P."/>
            <person name="Markowitz S.D."/>
            <person name="Willis J."/>
            <person name="Dawson D."/>
            <person name="Willson J.K.V."/>
            <person name="Gazdar A.F."/>
            <person name="Hartigan J."/>
            <person name="Wu L."/>
            <person name="Liu C."/>
            <person name="Parmigiani G."/>
            <person name="Park B.H."/>
            <person name="Bachman K.E."/>
            <person name="Papadopoulos N."/>
            <person name="Vogelstein B."/>
            <person name="Kinzler K.W."/>
            <person name="Velculescu V.E."/>
        </authorList>
    </citation>
    <scope>VARIANT [LARGE SCALE ANALYSIS] ALA-275</scope>
</reference>
<gene>
    <name evidence="10" type="primary">GMCL2</name>
    <name type="synonym">GCL</name>
    <name type="synonym">GMCL1L</name>
    <name type="synonym">GMCL1P1</name>
</gene>
<comment type="function">
    <text evidence="1 5">Possible function in spermatogenesis. Probable substrate-specific adapter of an E3 ubiquitin-protein ligase complex which mediates the ubiquitination and subsequent proteasomal degradation of target proteins (PubMed:14528312).</text>
</comment>
<comment type="pathway">
    <text evidence="5">Protein modification; protein ubiquitination.</text>
</comment>
<comment type="subunit">
    <text evidence="5">Interacts with CUL3.</text>
</comment>
<comment type="interaction">
    <interactant intactId="EBI-745707">
        <id>Q8NEA9</id>
    </interactant>
    <interactant intactId="EBI-10173507">
        <id>Q6UY14-3</id>
        <label>ADAMTSL4</label>
    </interactant>
    <organismsDiffer>false</organismsDiffer>
    <experiments>3</experiments>
</comment>
<comment type="interaction">
    <interactant intactId="EBI-745707">
        <id>Q8NEA9</id>
    </interactant>
    <interactant intactId="EBI-10183342">
        <id>Q9H165-2</id>
        <label>BCL11A</label>
    </interactant>
    <organismsDiffer>false</organismsDiffer>
    <experiments>3</experiments>
</comment>
<comment type="interaction">
    <interactant intactId="EBI-745707">
        <id>Q8NEA9</id>
    </interactant>
    <interactant intactId="EBI-12275524">
        <id>P23560-2</id>
        <label>BDNF</label>
    </interactant>
    <organismsDiffer>false</organismsDiffer>
    <experiments>3</experiments>
</comment>
<comment type="interaction">
    <interactant intactId="EBI-745707">
        <id>Q8NEA9</id>
    </interactant>
    <interactant intactId="EBI-711810">
        <id>O14503</id>
        <label>BHLHE40</label>
    </interactant>
    <organismsDiffer>false</organismsDiffer>
    <experiments>3</experiments>
</comment>
<comment type="interaction">
    <interactant intactId="EBI-745707">
        <id>Q8NEA9</id>
    </interactant>
    <interactant intactId="EBI-743375">
        <id>Q9NX63</id>
        <label>CHCHD3</label>
    </interactant>
    <organismsDiffer>false</organismsDiffer>
    <experiments>3</experiments>
</comment>
<comment type="interaction">
    <interactant intactId="EBI-745707">
        <id>Q8NEA9</id>
    </interactant>
    <interactant intactId="EBI-10976677">
        <id>G5E9A7</id>
        <label>DMWD</label>
    </interactant>
    <organismsDiffer>false</organismsDiffer>
    <experiments>3</experiments>
</comment>
<comment type="interaction">
    <interactant intactId="EBI-745707">
        <id>Q8NEA9</id>
    </interactant>
    <interactant intactId="EBI-10172181">
        <id>Q53SE7</id>
        <label>FLJ13057</label>
    </interactant>
    <organismsDiffer>false</organismsDiffer>
    <experiments>3</experiments>
</comment>
<comment type="interaction">
    <interactant intactId="EBI-745707">
        <id>Q8NEA9</id>
    </interactant>
    <interactant intactId="EBI-10172187">
        <id>A1L429</id>
        <label>GAGE12E</label>
    </interactant>
    <organismsDiffer>false</organismsDiffer>
    <experiments>3</experiments>
</comment>
<comment type="interaction">
    <interactant intactId="EBI-745707">
        <id>Q8NEA9</id>
    </interactant>
    <interactant intactId="EBI-10196803">
        <id>P0CL82</id>
        <label>GAGE12I</label>
    </interactant>
    <organismsDiffer>false</organismsDiffer>
    <experiments>3</experiments>
</comment>
<comment type="interaction">
    <interactant intactId="EBI-745707">
        <id>Q8NEA9</id>
    </interactant>
    <interactant intactId="EBI-751641">
        <id>Q9UEU5</id>
        <label>GAGE2D</label>
    </interactant>
    <organismsDiffer>false</organismsDiffer>
    <experiments>5</experiments>
</comment>
<comment type="interaction">
    <interactant intactId="EBI-745707">
        <id>Q8NEA9</id>
    </interactant>
    <interactant intactId="EBI-745702">
        <id>Q13069</id>
        <label>GAGE5</label>
    </interactant>
    <organismsDiffer>false</organismsDiffer>
    <experiments>4</experiments>
</comment>
<comment type="interaction">
    <interactant intactId="EBI-745707">
        <id>Q8NEA9</id>
    </interactant>
    <interactant intactId="EBI-354056">
        <id>P04406</id>
        <label>GAPDH</label>
    </interactant>
    <organismsDiffer>false</organismsDiffer>
    <experiments>3</experiments>
</comment>
<comment type="interaction">
    <interactant intactId="EBI-745707">
        <id>Q8NEA9</id>
    </interactant>
    <interactant intactId="EBI-486809">
        <id>P52272</id>
        <label>HNRNPM</label>
    </interactant>
    <organismsDiffer>false</organismsDiffer>
    <experiments>3</experiments>
</comment>
<comment type="interaction">
    <interactant intactId="EBI-745707">
        <id>Q8NEA9</id>
    </interactant>
    <interactant intactId="EBI-745305">
        <id>Q13422</id>
        <label>IKZF1</label>
    </interactant>
    <organismsDiffer>false</organismsDiffer>
    <experiments>3</experiments>
</comment>
<comment type="interaction">
    <interactant intactId="EBI-745707">
        <id>Q8NEA9</id>
    </interactant>
    <interactant intactId="EBI-1055254">
        <id>Q8WXH2</id>
        <label>JPH3</label>
    </interactant>
    <organismsDiffer>false</organismsDiffer>
    <experiments>3</experiments>
</comment>
<comment type="interaction">
    <interactant intactId="EBI-745707">
        <id>Q8NEA9</id>
    </interactant>
    <interactant intactId="EBI-399080">
        <id>Q92993</id>
        <label>KAT5</label>
    </interactant>
    <organismsDiffer>false</organismsDiffer>
    <experiments>3</experiments>
</comment>
<comment type="interaction">
    <interactant intactId="EBI-745707">
        <id>Q8NEA9</id>
    </interactant>
    <interactant intactId="EBI-10196832">
        <id>P0CW20</id>
        <label>LIMS4</label>
    </interactant>
    <organismsDiffer>false</organismsDiffer>
    <experiments>3</experiments>
</comment>
<comment type="interaction">
    <interactant intactId="EBI-745707">
        <id>Q8NEA9</id>
    </interactant>
    <interactant intactId="EBI-351935">
        <id>P02545</id>
        <label>LMNA</label>
    </interactant>
    <organismsDiffer>false</organismsDiffer>
    <experiments>3</experiments>
</comment>
<comment type="interaction">
    <interactant intactId="EBI-745707">
        <id>Q8NEA9</id>
    </interactant>
    <interactant intactId="EBI-741037">
        <id>Q9BRK4</id>
        <label>LZTS2</label>
    </interactant>
    <organismsDiffer>false</organismsDiffer>
    <experiments>3</experiments>
</comment>
<comment type="interaction">
    <interactant intactId="EBI-745707">
        <id>Q8NEA9</id>
    </interactant>
    <interactant intactId="EBI-748397">
        <id>P50222</id>
        <label>MEOX2</label>
    </interactant>
    <organismsDiffer>false</organismsDiffer>
    <experiments>3</experiments>
</comment>
<comment type="interaction">
    <interactant intactId="EBI-745707">
        <id>Q8NEA9</id>
    </interactant>
    <interactant intactId="EBI-2515568">
        <id>Q6PI26</id>
        <label>SHQ1</label>
    </interactant>
    <organismsDiffer>false</organismsDiffer>
    <experiments>3</experiments>
</comment>
<comment type="interaction">
    <interactant intactId="EBI-745707">
        <id>Q8NEA9</id>
    </interactant>
    <interactant intactId="EBI-5235340">
        <id>Q7Z699</id>
        <label>SPRED1</label>
    </interactant>
    <organismsDiffer>false</organismsDiffer>
    <experiments>3</experiments>
</comment>
<comment type="interaction">
    <interactant intactId="EBI-745707">
        <id>Q8NEA9</id>
    </interactant>
    <interactant intactId="EBI-359224">
        <id>Q13077</id>
        <label>TRAF1</label>
    </interactant>
    <organismsDiffer>false</organismsDiffer>
    <experiments>3</experiments>
</comment>
<comment type="interaction">
    <interactant intactId="EBI-745707">
        <id>Q8NEA9</id>
    </interactant>
    <interactant intactId="EBI-740098">
        <id>P36406</id>
        <label>TRIM23</label>
    </interactant>
    <organismsDiffer>false</organismsDiffer>
    <experiments>3</experiments>
</comment>
<comment type="interaction">
    <interactant intactId="EBI-745707">
        <id>Q8NEA9</id>
    </interactant>
    <interactant intactId="EBI-12806590">
        <id>Q86WV8</id>
        <label>TSC1</label>
    </interactant>
    <organismsDiffer>false</organismsDiffer>
    <experiments>3</experiments>
</comment>
<comment type="interaction">
    <interactant intactId="EBI-745707">
        <id>Q8NEA9</id>
    </interactant>
    <interactant intactId="EBI-10180829">
        <id>Q7KZS0</id>
        <label>UBE2I</label>
    </interactant>
    <organismsDiffer>false</organismsDiffer>
    <experiments>3</experiments>
</comment>
<comment type="interaction">
    <interactant intactId="EBI-745707">
        <id>Q8NEA9</id>
    </interactant>
    <interactant intactId="EBI-739895">
        <id>Q8N6Y0</id>
        <label>USHBP1</label>
    </interactant>
    <organismsDiffer>false</organismsDiffer>
    <experiments>3</experiments>
</comment>
<comment type="interaction">
    <interactant intactId="EBI-745707">
        <id>Q8NEA9</id>
    </interactant>
    <interactant intactId="EBI-750167">
        <id>Q96GT9</id>
        <label>XAGE2</label>
    </interactant>
    <organismsDiffer>false</organismsDiffer>
    <experiments>3</experiments>
</comment>
<comment type="subcellular location">
    <subcellularLocation>
        <location evidence="1">Nucleus matrix</location>
    </subcellularLocation>
</comment>
<comment type="tissue specificity">
    <text evidence="6">Expressed predominantly in testis.</text>
</comment>
<comment type="miscellaneous">
    <text evidence="9">According to some authors, GMCL2 is a GMCL retrogene on chromosome 5 which is likely to be functional.</text>
</comment>
<feature type="chain" id="PRO_0000087523" description="Germ cell-less protein-like 2">
    <location>
        <begin position="1"/>
        <end position="526"/>
    </location>
</feature>
<feature type="domain" description="BTB" evidence="3">
    <location>
        <begin position="108"/>
        <end position="178"/>
    </location>
</feature>
<feature type="region of interest" description="Disordered" evidence="4">
    <location>
        <begin position="1"/>
        <end position="85"/>
    </location>
</feature>
<feature type="short sequence motif" description="Nuclear localization signal" evidence="2">
    <location>
        <begin position="49"/>
        <end position="55"/>
    </location>
</feature>
<feature type="short sequence motif" description="Nuclear localization signal" evidence="2">
    <location>
        <begin position="85"/>
        <end position="91"/>
    </location>
</feature>
<feature type="compositionally biased region" description="Basic and acidic residues" evidence="4">
    <location>
        <begin position="62"/>
        <end position="77"/>
    </location>
</feature>
<feature type="sequence variant" id="VAR_035924" description="In a colorectal cancer sample; somatic mutation." evidence="7">
    <original>V</original>
    <variation>A</variation>
    <location>
        <position position="275"/>
    </location>
</feature>
<feature type="sequence conflict" description="In Ref. 4; ABB92410." evidence="8" ref="4">
    <original>S</original>
    <variation>G</variation>
    <location>
        <position position="40"/>
    </location>
</feature>
<feature type="sequence conflict" description="In Ref. 3; BC024184." evidence="8" ref="3">
    <original>P</original>
    <variation>Q</variation>
    <location>
        <position position="47"/>
    </location>
</feature>
<feature type="sequence conflict" description="In Ref. 3; BC024184/BC024185." evidence="8" ref="3">
    <original>K</original>
    <variation>E</variation>
    <location>
        <position position="230"/>
    </location>
</feature>
<feature type="sequence conflict" description="In Ref. 1; BAG38063 and 3; BC024184/BC024185/BC033886." ref="1 3">
    <original>R</original>
    <variation>H</variation>
    <location>
        <position position="378"/>
    </location>
</feature>
<feature type="sequence conflict" description="In Ref. 1; BAG38063, 3; BC024184/BC024185/BC033886 and 4; ABB92410." ref="1 3 4">
    <original>N</original>
    <variation>S</variation>
    <location>
        <position position="393"/>
    </location>
</feature>
<feature type="sequence conflict" description="In Ref. 1; BAG38063, 3; BC024184/BC024185/BC033886 and 4; ABB92410." ref="1 3 4">
    <original>R</original>
    <variation>C</variation>
    <location>
        <position position="440"/>
    </location>
</feature>
<feature type="sequence conflict" description="In Ref. 1; BAG38063 and 3; BC024184/BC024185/BC033886." ref="1 3">
    <original>N</original>
    <variation>D</variation>
    <location>
        <position position="523"/>
    </location>
</feature>
<protein>
    <recommendedName>
        <fullName evidence="8">Germ cell-less protein-like 2</fullName>
    </recommendedName>
    <alternativeName>
        <fullName>Germ cell-less protein-like 1-like</fullName>
    </alternativeName>
</protein>
<keyword id="KW-0217">Developmental protein</keyword>
<keyword id="KW-0221">Differentiation</keyword>
<keyword id="KW-0539">Nucleus</keyword>
<keyword id="KW-1185">Reference proteome</keyword>
<keyword id="KW-0744">Spermatogenesis</keyword>
<keyword id="KW-0833">Ubl conjugation pathway</keyword>
<accession>Q8NEA9</accession>
<accession>B2RDW6</accession>
<accession>Q2VIQ8</accession>
<accession>Q8TC88</accession>
<accession>Q8TC89</accession>
<name>GMCL2_HUMAN</name>
<sequence>MGSSSSRVLGQPRRALAQQEQGARARGSARRPDTGDDAASYGFCYCPGSHKRKRSSGACRYCDPDSHREEHEEEGDKQQPLLNTPARKKLRSTSKYIYQTLFLNGENSDIKICALGEEWRLHKIYLCQSGYFSSMFSGSWKESSMNIIELEIPDQNIDVDALQVAFGSLYRDDVLIKPSRVVAILAAACMLQLDGLIQQCGETMKETINVKTVCGYYTSVEIYGLDSVKKKCLEWLLNNLMTHQNVKLFKELGINVMKQLIGSSNLFVMQVEMDVYTTLKKWMFLQLVPSWNGSLKQLLTETDVWFSKQRKDFEGMAFLETEPGKPFVSVFRHLRLQYIISDLASARIIEQDGIVPSEWLSSVYKQQWFAMLRAEQDREVGPQEINKEDLEGNSMRCGRKLAKDGEYYWCWTGFNFGFDLLVIYTNGYIIFKRNTLNQPRSGSVSLRPRRSIAFRLRLASFDSSGKLVCSRTTGYQILILKKDQEQVVMNLDSRFLTFPLYICCNFLYISPEKGIENNRHPENPEN</sequence>
<organism>
    <name type="scientific">Homo sapiens</name>
    <name type="common">Human</name>
    <dbReference type="NCBI Taxonomy" id="9606"/>
    <lineage>
        <taxon>Eukaryota</taxon>
        <taxon>Metazoa</taxon>
        <taxon>Chordata</taxon>
        <taxon>Craniata</taxon>
        <taxon>Vertebrata</taxon>
        <taxon>Euteleostomi</taxon>
        <taxon>Mammalia</taxon>
        <taxon>Eutheria</taxon>
        <taxon>Euarchontoglires</taxon>
        <taxon>Primates</taxon>
        <taxon>Haplorrhini</taxon>
        <taxon>Catarrhini</taxon>
        <taxon>Hominidae</taxon>
        <taxon>Homo</taxon>
    </lineage>
</organism>
<evidence type="ECO:0000250" key="1">
    <source>
        <dbReference type="UniProtKB" id="Q920G9"/>
    </source>
</evidence>
<evidence type="ECO:0000255" key="2"/>
<evidence type="ECO:0000255" key="3">
    <source>
        <dbReference type="PROSITE-ProRule" id="PRU00037"/>
    </source>
</evidence>
<evidence type="ECO:0000256" key="4">
    <source>
        <dbReference type="SAM" id="MobiDB-lite"/>
    </source>
</evidence>
<evidence type="ECO:0000269" key="5">
    <source>
    </source>
</evidence>
<evidence type="ECO:0000269" key="6">
    <source>
    </source>
</evidence>
<evidence type="ECO:0000269" key="7">
    <source>
    </source>
</evidence>
<evidence type="ECO:0000305" key="8"/>
<evidence type="ECO:0000305" key="9">
    <source>
    </source>
</evidence>
<evidence type="ECO:0000312" key="10">
    <source>
        <dbReference type="HGNC" id="HGNC:19717"/>
    </source>
</evidence>